<gene>
    <name evidence="1" type="primary">groEL</name>
    <name evidence="1" type="synonym">groL</name>
    <name type="synonym">mopA</name>
    <name type="ordered locus">Bfl071</name>
</gene>
<sequence>MAAKDVKFGNDARVKMLRGVNVLADAVKVTLGPKGRNVVLDKSFGAPVITKDGVSVAREIELEDKFENMGAQMVKEVASKANDSAGDGTTTATVLAQSIVNEGLKAVAAGMNPMDLKRGIDKAVVAAVEELKKLSVPCSDPKAIAQVGTISANSDETVGKLIAQAMDKVGKEGVITVEEGSGLQDELDVVEGMQFDRGYLSPYFVNKPESGTVELEHPFILLADKKISNIREMLPILESVAKSGKPLLIIAEDVEGEALATLVVNNMRGIVKVTAVKAPGFGDRRKAMLQDIAILTSGTVISEEIGLELEKATLEDMGQAKRVLITKDATTIIDGVGNKSSIDSRVAQINQQRDEATSDYDREKLQERVAKLAGGVAVIKVGAATEVEMKEKKARVEDALHATRAAVEEGVVAGGGVALIRVANAIRNLCGDNEDQNVGIKVARRAMEAPLRQIMANAGEEPSVIANNVRSGEGNTGYNAATEKYGNMIELGILDPTKVTRSALQYAASIAGLMITTECMVTELPKEDKPDLGGGNPGGAGGMGGMM</sequence>
<name>CH60_BLOFL</name>
<reference key="1">
    <citation type="journal article" date="2003" name="Proc. Natl. Acad. Sci. U.S.A.">
        <title>The genome sequence of Blochmannia floridanus: comparative analysis of reduced genomes.</title>
        <authorList>
            <person name="Gil R."/>
            <person name="Silva F.J."/>
            <person name="Zientz E."/>
            <person name="Delmotte F."/>
            <person name="Gonzalez-Candelas F."/>
            <person name="Latorre A."/>
            <person name="Rausell C."/>
            <person name="Kamerbeek J."/>
            <person name="Gadau J."/>
            <person name="Hoelldobler B."/>
            <person name="van Ham R.C.H.J."/>
            <person name="Gross R."/>
            <person name="Moya A."/>
        </authorList>
    </citation>
    <scope>NUCLEOTIDE SEQUENCE [LARGE SCALE GENOMIC DNA]</scope>
</reference>
<comment type="function">
    <text evidence="1">Together with its co-chaperonin GroES, plays an essential role in assisting protein folding. The GroEL-GroES system forms a nano-cage that allows encapsulation of the non-native substrate proteins and provides a physical environment optimized to promote and accelerate protein folding.</text>
</comment>
<comment type="catalytic activity">
    <reaction evidence="1">
        <text>ATP + H2O + a folded polypeptide = ADP + phosphate + an unfolded polypeptide.</text>
        <dbReference type="EC" id="5.6.1.7"/>
    </reaction>
</comment>
<comment type="subunit">
    <text evidence="1">Forms a cylinder of 14 subunits composed of two heptameric rings stacked back-to-back. Interacts with the co-chaperonin GroES.</text>
</comment>
<comment type="subcellular location">
    <subcellularLocation>
        <location evidence="1">Cytoplasm</location>
    </subcellularLocation>
</comment>
<comment type="similarity">
    <text evidence="1">Belongs to the chaperonin (HSP60) family.</text>
</comment>
<organism>
    <name type="scientific">Blochmanniella floridana</name>
    <dbReference type="NCBI Taxonomy" id="203907"/>
    <lineage>
        <taxon>Bacteria</taxon>
        <taxon>Pseudomonadati</taxon>
        <taxon>Pseudomonadota</taxon>
        <taxon>Gammaproteobacteria</taxon>
        <taxon>Enterobacterales</taxon>
        <taxon>Enterobacteriaceae</taxon>
        <taxon>ant endosymbionts</taxon>
        <taxon>Candidatus Blochmanniella</taxon>
    </lineage>
</organism>
<dbReference type="EC" id="5.6.1.7" evidence="1"/>
<dbReference type="EMBL" id="BX248583">
    <property type="protein sequence ID" value="CAD83595.1"/>
    <property type="molecule type" value="Genomic_DNA"/>
</dbReference>
<dbReference type="SMR" id="Q7U348"/>
<dbReference type="STRING" id="203907.Bfl071"/>
<dbReference type="KEGG" id="bfl:Bfl071"/>
<dbReference type="eggNOG" id="COG0459">
    <property type="taxonomic scope" value="Bacteria"/>
</dbReference>
<dbReference type="HOGENOM" id="CLU_016503_3_0_6"/>
<dbReference type="OrthoDB" id="9766614at2"/>
<dbReference type="Proteomes" id="UP000002192">
    <property type="component" value="Chromosome"/>
</dbReference>
<dbReference type="GO" id="GO:0005737">
    <property type="term" value="C:cytoplasm"/>
    <property type="evidence" value="ECO:0007669"/>
    <property type="project" value="UniProtKB-SubCell"/>
</dbReference>
<dbReference type="GO" id="GO:0005524">
    <property type="term" value="F:ATP binding"/>
    <property type="evidence" value="ECO:0007669"/>
    <property type="project" value="UniProtKB-UniRule"/>
</dbReference>
<dbReference type="GO" id="GO:0140662">
    <property type="term" value="F:ATP-dependent protein folding chaperone"/>
    <property type="evidence" value="ECO:0007669"/>
    <property type="project" value="InterPro"/>
</dbReference>
<dbReference type="GO" id="GO:0016853">
    <property type="term" value="F:isomerase activity"/>
    <property type="evidence" value="ECO:0007669"/>
    <property type="project" value="UniProtKB-KW"/>
</dbReference>
<dbReference type="GO" id="GO:0051082">
    <property type="term" value="F:unfolded protein binding"/>
    <property type="evidence" value="ECO:0007669"/>
    <property type="project" value="UniProtKB-UniRule"/>
</dbReference>
<dbReference type="GO" id="GO:0042026">
    <property type="term" value="P:protein refolding"/>
    <property type="evidence" value="ECO:0007669"/>
    <property type="project" value="UniProtKB-UniRule"/>
</dbReference>
<dbReference type="CDD" id="cd03344">
    <property type="entry name" value="GroEL"/>
    <property type="match status" value="1"/>
</dbReference>
<dbReference type="FunFam" id="1.10.560.10:FF:000001">
    <property type="entry name" value="60 kDa chaperonin"/>
    <property type="match status" value="1"/>
</dbReference>
<dbReference type="FunFam" id="3.50.7.10:FF:000001">
    <property type="entry name" value="60 kDa chaperonin"/>
    <property type="match status" value="1"/>
</dbReference>
<dbReference type="Gene3D" id="3.50.7.10">
    <property type="entry name" value="GroEL"/>
    <property type="match status" value="1"/>
</dbReference>
<dbReference type="Gene3D" id="1.10.560.10">
    <property type="entry name" value="GroEL-like equatorial domain"/>
    <property type="match status" value="1"/>
</dbReference>
<dbReference type="Gene3D" id="3.30.260.10">
    <property type="entry name" value="TCP-1-like chaperonin intermediate domain"/>
    <property type="match status" value="1"/>
</dbReference>
<dbReference type="HAMAP" id="MF_00600">
    <property type="entry name" value="CH60"/>
    <property type="match status" value="1"/>
</dbReference>
<dbReference type="InterPro" id="IPR018370">
    <property type="entry name" value="Chaperonin_Cpn60_CS"/>
</dbReference>
<dbReference type="InterPro" id="IPR001844">
    <property type="entry name" value="Cpn60/GroEL"/>
</dbReference>
<dbReference type="InterPro" id="IPR002423">
    <property type="entry name" value="Cpn60/GroEL/TCP-1"/>
</dbReference>
<dbReference type="InterPro" id="IPR027409">
    <property type="entry name" value="GroEL-like_apical_dom_sf"/>
</dbReference>
<dbReference type="InterPro" id="IPR027413">
    <property type="entry name" value="GROEL-like_equatorial_sf"/>
</dbReference>
<dbReference type="InterPro" id="IPR027410">
    <property type="entry name" value="TCP-1-like_intermed_sf"/>
</dbReference>
<dbReference type="NCBIfam" id="TIGR02348">
    <property type="entry name" value="GroEL"/>
    <property type="match status" value="1"/>
</dbReference>
<dbReference type="NCBIfam" id="NF000592">
    <property type="entry name" value="PRK00013.1"/>
    <property type="match status" value="1"/>
</dbReference>
<dbReference type="NCBIfam" id="NF009487">
    <property type="entry name" value="PRK12849.1"/>
    <property type="match status" value="1"/>
</dbReference>
<dbReference type="NCBIfam" id="NF009488">
    <property type="entry name" value="PRK12850.1"/>
    <property type="match status" value="1"/>
</dbReference>
<dbReference type="NCBIfam" id="NF009489">
    <property type="entry name" value="PRK12851.1"/>
    <property type="match status" value="1"/>
</dbReference>
<dbReference type="PANTHER" id="PTHR45633">
    <property type="entry name" value="60 KDA HEAT SHOCK PROTEIN, MITOCHONDRIAL"/>
    <property type="match status" value="1"/>
</dbReference>
<dbReference type="Pfam" id="PF00118">
    <property type="entry name" value="Cpn60_TCP1"/>
    <property type="match status" value="1"/>
</dbReference>
<dbReference type="PRINTS" id="PR00298">
    <property type="entry name" value="CHAPERONIN60"/>
</dbReference>
<dbReference type="SUPFAM" id="SSF52029">
    <property type="entry name" value="GroEL apical domain-like"/>
    <property type="match status" value="1"/>
</dbReference>
<dbReference type="SUPFAM" id="SSF48592">
    <property type="entry name" value="GroEL equatorial domain-like"/>
    <property type="match status" value="1"/>
</dbReference>
<dbReference type="SUPFAM" id="SSF54849">
    <property type="entry name" value="GroEL-intermediate domain like"/>
    <property type="match status" value="1"/>
</dbReference>
<dbReference type="PROSITE" id="PS00296">
    <property type="entry name" value="CHAPERONINS_CPN60"/>
    <property type="match status" value="1"/>
</dbReference>
<keyword id="KW-0067">ATP-binding</keyword>
<keyword id="KW-0143">Chaperone</keyword>
<keyword id="KW-0963">Cytoplasm</keyword>
<keyword id="KW-0413">Isomerase</keyword>
<keyword id="KW-0547">Nucleotide-binding</keyword>
<keyword id="KW-1185">Reference proteome</keyword>
<protein>
    <recommendedName>
        <fullName evidence="1">Chaperonin GroEL</fullName>
        <ecNumber evidence="1">5.6.1.7</ecNumber>
    </recommendedName>
    <alternativeName>
        <fullName evidence="1">60 kDa chaperonin</fullName>
    </alternativeName>
    <alternativeName>
        <fullName evidence="1">Chaperonin-60</fullName>
        <shortName evidence="1">Cpn60</shortName>
    </alternativeName>
</protein>
<evidence type="ECO:0000255" key="1">
    <source>
        <dbReference type="HAMAP-Rule" id="MF_00600"/>
    </source>
</evidence>
<evidence type="ECO:0000256" key="2">
    <source>
        <dbReference type="SAM" id="MobiDB-lite"/>
    </source>
</evidence>
<accession>Q7U348</accession>
<proteinExistence type="inferred from homology"/>
<feature type="chain" id="PRO_0000063324" description="Chaperonin GroEL">
    <location>
        <begin position="1"/>
        <end position="547"/>
    </location>
</feature>
<feature type="region of interest" description="Disordered" evidence="2">
    <location>
        <begin position="525"/>
        <end position="547"/>
    </location>
</feature>
<feature type="compositionally biased region" description="Gly residues" evidence="2">
    <location>
        <begin position="532"/>
        <end position="547"/>
    </location>
</feature>
<feature type="binding site" evidence="1">
    <location>
        <begin position="30"/>
        <end position="33"/>
    </location>
    <ligand>
        <name>ATP</name>
        <dbReference type="ChEBI" id="CHEBI:30616"/>
    </ligand>
</feature>
<feature type="binding site" evidence="1">
    <location>
        <position position="51"/>
    </location>
    <ligand>
        <name>ATP</name>
        <dbReference type="ChEBI" id="CHEBI:30616"/>
    </ligand>
</feature>
<feature type="binding site" evidence="1">
    <location>
        <begin position="87"/>
        <end position="91"/>
    </location>
    <ligand>
        <name>ATP</name>
        <dbReference type="ChEBI" id="CHEBI:30616"/>
    </ligand>
</feature>
<feature type="binding site" evidence="1">
    <location>
        <position position="415"/>
    </location>
    <ligand>
        <name>ATP</name>
        <dbReference type="ChEBI" id="CHEBI:30616"/>
    </ligand>
</feature>
<feature type="binding site" evidence="1">
    <location>
        <begin position="479"/>
        <end position="481"/>
    </location>
    <ligand>
        <name>ATP</name>
        <dbReference type="ChEBI" id="CHEBI:30616"/>
    </ligand>
</feature>
<feature type="binding site" evidence="1">
    <location>
        <position position="495"/>
    </location>
    <ligand>
        <name>ATP</name>
        <dbReference type="ChEBI" id="CHEBI:30616"/>
    </ligand>
</feature>